<evidence type="ECO:0000269" key="1">
    <source>
    </source>
</evidence>
<evidence type="ECO:0000269" key="2">
    <source>
    </source>
</evidence>
<evidence type="ECO:0000269" key="3">
    <source>
    </source>
</evidence>
<evidence type="ECO:0000269" key="4">
    <source>
    </source>
</evidence>
<evidence type="ECO:0000269" key="5">
    <source>
    </source>
</evidence>
<evidence type="ECO:0000303" key="6">
    <source>
    </source>
</evidence>
<evidence type="ECO:0000305" key="7"/>
<evidence type="ECO:0000305" key="8">
    <source>
    </source>
</evidence>
<evidence type="ECO:0000312" key="9">
    <source>
        <dbReference type="Araport" id="AT3G57560"/>
    </source>
</evidence>
<evidence type="ECO:0000312" key="10">
    <source>
        <dbReference type="EMBL" id="CAB66113.1"/>
    </source>
</evidence>
<evidence type="ECO:0007744" key="11">
    <source>
        <dbReference type="PDB" id="2RD5"/>
    </source>
</evidence>
<evidence type="ECO:0007744" key="12">
    <source>
        <dbReference type="PDB" id="4USJ"/>
    </source>
</evidence>
<evidence type="ECO:0007744" key="13">
    <source>
    </source>
</evidence>
<evidence type="ECO:0007829" key="14">
    <source>
        <dbReference type="PDB" id="2RD5"/>
    </source>
</evidence>
<feature type="transit peptide" description="Chloroplast" evidence="1 13">
    <location>
        <begin position="1"/>
        <end position="50"/>
    </location>
</feature>
<feature type="chain" id="PRO_0000401370" description="Acetylglutamate kinase, chloroplastic">
    <location>
        <begin position="51"/>
        <end position="347"/>
    </location>
</feature>
<feature type="binding site" evidence="5 12">
    <location>
        <begin position="94"/>
        <end position="95"/>
    </location>
    <ligand>
        <name>ATP</name>
        <dbReference type="ChEBI" id="CHEBI:30616"/>
    </ligand>
</feature>
<feature type="binding site" evidence="5 12">
    <location>
        <position position="126"/>
    </location>
    <ligand>
        <name>N-acetyl-L-glutamate</name>
        <dbReference type="ChEBI" id="CHEBI:44337"/>
    </ligand>
</feature>
<feature type="binding site" evidence="3 5 11 12">
    <location>
        <position position="148"/>
    </location>
    <ligand>
        <name>N-acetyl-L-glutamate</name>
        <dbReference type="ChEBI" id="CHEBI:44337"/>
    </ligand>
</feature>
<feature type="binding site" evidence="3 5 11 12">
    <location>
        <begin position="242"/>
        <end position="245"/>
    </location>
    <ligand>
        <name>N-acetyl-L-glutamate</name>
        <dbReference type="ChEBI" id="CHEBI:44337"/>
    </ligand>
</feature>
<feature type="binding site" evidence="3 5 11 12">
    <location>
        <position position="260"/>
    </location>
    <ligand>
        <name>L-arginine</name>
        <dbReference type="ChEBI" id="CHEBI:32682"/>
    </ligand>
</feature>
<feature type="binding site" evidence="5 12">
    <location>
        <begin position="265"/>
        <end position="266"/>
    </location>
    <ligand>
        <name>ATP</name>
        <dbReference type="ChEBI" id="CHEBI:30616"/>
    </ligand>
</feature>
<feature type="binding site" evidence="3 5 11 12">
    <location>
        <position position="271"/>
    </location>
    <ligand>
        <name>ATP</name>
        <dbReference type="ChEBI" id="CHEBI:30616"/>
    </ligand>
</feature>
<feature type="binding site" evidence="3 5 11 12">
    <location>
        <position position="282"/>
    </location>
    <ligand>
        <name>L-arginine</name>
        <dbReference type="ChEBI" id="CHEBI:32682"/>
    </ligand>
</feature>
<feature type="binding site" evidence="3 11">
    <location>
        <begin position="297"/>
        <end position="305"/>
    </location>
    <ligand>
        <name>ATP</name>
        <dbReference type="ChEBI" id="CHEBI:30616"/>
    </ligand>
</feature>
<feature type="binding site" evidence="3 5 11 12">
    <location>
        <begin position="334"/>
        <end position="337"/>
    </location>
    <ligand>
        <name>L-arginine</name>
        <dbReference type="ChEBI" id="CHEBI:32682"/>
    </ligand>
</feature>
<feature type="binding site" evidence="3 5 11 12">
    <location>
        <position position="342"/>
    </location>
    <ligand>
        <name>L-arginine</name>
        <dbReference type="ChEBI" id="CHEBI:32682"/>
    </ligand>
</feature>
<feature type="modified residue" description="N-acetylthreonine" evidence="13">
    <location>
        <position position="51"/>
    </location>
</feature>
<feature type="helix" evidence="14">
    <location>
        <begin position="68"/>
        <end position="75"/>
    </location>
</feature>
<feature type="helix" evidence="14">
    <location>
        <begin position="77"/>
        <end position="82"/>
    </location>
</feature>
<feature type="turn" evidence="14">
    <location>
        <begin position="83"/>
        <end position="85"/>
    </location>
</feature>
<feature type="strand" evidence="14">
    <location>
        <begin position="87"/>
        <end position="92"/>
    </location>
</feature>
<feature type="helix" evidence="14">
    <location>
        <begin position="95"/>
        <end position="98"/>
    </location>
</feature>
<feature type="helix" evidence="14">
    <location>
        <begin position="100"/>
        <end position="115"/>
    </location>
</feature>
<feature type="strand" evidence="14">
    <location>
        <begin position="119"/>
        <end position="124"/>
    </location>
</feature>
<feature type="helix" evidence="14">
    <location>
        <begin position="127"/>
        <end position="136"/>
    </location>
</feature>
<feature type="helix" evidence="14">
    <location>
        <begin position="152"/>
        <end position="164"/>
    </location>
</feature>
<feature type="helix" evidence="14">
    <location>
        <begin position="166"/>
        <end position="176"/>
    </location>
</feature>
<feature type="strand" evidence="14">
    <location>
        <begin position="181"/>
        <end position="185"/>
    </location>
</feature>
<feature type="helix" evidence="14">
    <location>
        <begin position="188"/>
        <end position="190"/>
    </location>
</feature>
<feature type="strand" evidence="14">
    <location>
        <begin position="192"/>
        <end position="196"/>
    </location>
</feature>
<feature type="helix" evidence="14">
    <location>
        <begin position="200"/>
        <end position="203"/>
    </location>
</feature>
<feature type="strand" evidence="14">
    <location>
        <begin position="204"/>
        <end position="212"/>
    </location>
</feature>
<feature type="helix" evidence="14">
    <location>
        <begin position="214"/>
        <end position="216"/>
    </location>
</feature>
<feature type="helix" evidence="14">
    <location>
        <begin position="217"/>
        <end position="222"/>
    </location>
</feature>
<feature type="strand" evidence="14">
    <location>
        <begin position="226"/>
        <end position="234"/>
    </location>
</feature>
<feature type="strand" evidence="14">
    <location>
        <begin position="240"/>
        <end position="243"/>
    </location>
</feature>
<feature type="helix" evidence="14">
    <location>
        <begin position="245"/>
        <end position="256"/>
    </location>
</feature>
<feature type="strand" evidence="14">
    <location>
        <begin position="259"/>
        <end position="275"/>
    </location>
</feature>
<feature type="strand" evidence="14">
    <location>
        <begin position="279"/>
        <end position="281"/>
    </location>
</feature>
<feature type="strand" evidence="14">
    <location>
        <begin position="283"/>
        <end position="285"/>
    </location>
</feature>
<feature type="helix" evidence="14">
    <location>
        <begin position="286"/>
        <end position="294"/>
    </location>
</feature>
<feature type="helix" evidence="14">
    <location>
        <begin position="302"/>
        <end position="314"/>
    </location>
</feature>
<feature type="strand" evidence="14">
    <location>
        <begin position="318"/>
        <end position="324"/>
    </location>
</feature>
<feature type="helix" evidence="14">
    <location>
        <begin position="330"/>
        <end position="336"/>
    </location>
</feature>
<feature type="strand" evidence="14">
    <location>
        <begin position="337"/>
        <end position="339"/>
    </location>
</feature>
<feature type="strand" evidence="14">
    <location>
        <begin position="341"/>
        <end position="346"/>
    </location>
</feature>
<protein>
    <recommendedName>
        <fullName evidence="7">Acetylglutamate kinase, chloroplastic</fullName>
        <ecNumber evidence="1">2.7.2.8</ecNumber>
    </recommendedName>
    <alternativeName>
        <fullName evidence="7">N-acetyl-L-glutamate 5-phosphotransferase</fullName>
    </alternativeName>
    <alternativeName>
        <fullName evidence="6">NAG kinase</fullName>
        <shortName evidence="6">AtNAGK</shortName>
    </alternativeName>
</protein>
<proteinExistence type="evidence at protein level"/>
<accession>Q9SCL7</accession>
<accession>Q8LA25</accession>
<name>NAGK_ARATH</name>
<sequence>MATVTSNASPKSFSFTVSNPFKTLIPNKSPSLCYPTRNKNHHRLGFSIKATVSTPPSIATGNAPSPDYRVEILSESLPFIQKFRGKTIVVKYGGAAMTSPELKSSVVSDLVLLACVGLRPILVHGGGPDINRYLKQLNIPAEFRDGLRVTDATTMEIVSMVLVGKVNKNLVSLINAAGATAVGLSGHDGRLLTARPVPNSAQLGFVGEVARVDPSVLRPLVDYGYIPVIASVAADDSGQAYNINADTVAGELAAALGAEKLILLTDVAGILENKEDPSSLIKEIDIKGVKKMIEDGKVAGGMIPKVKCCIRSLAQGVKTASIIDGRRQHSLLHEIMSDEGAGTMITG</sequence>
<dbReference type="EC" id="2.7.2.8" evidence="1"/>
<dbReference type="EMBL" id="AL133248">
    <property type="protein sequence ID" value="CAB66113.1"/>
    <property type="molecule type" value="Genomic_DNA"/>
</dbReference>
<dbReference type="EMBL" id="CP002686">
    <property type="protein sequence ID" value="AEE79672.1"/>
    <property type="molecule type" value="Genomic_DNA"/>
</dbReference>
<dbReference type="EMBL" id="AY035107">
    <property type="protein sequence ID" value="AAK59612.1"/>
    <property type="molecule type" value="mRNA"/>
</dbReference>
<dbReference type="EMBL" id="AY113901">
    <property type="protein sequence ID" value="AAM44949.1"/>
    <property type="molecule type" value="mRNA"/>
</dbReference>
<dbReference type="EMBL" id="AY088067">
    <property type="protein sequence ID" value="AAM65613.1"/>
    <property type="molecule type" value="mRNA"/>
</dbReference>
<dbReference type="PIR" id="T46192">
    <property type="entry name" value="T46192"/>
</dbReference>
<dbReference type="RefSeq" id="NP_191315.1">
    <property type="nucleotide sequence ID" value="NM_115616.3"/>
</dbReference>
<dbReference type="PDB" id="2RD5">
    <property type="method" value="X-ray"/>
    <property type="resolution" value="2.51 A"/>
    <property type="chains" value="A/B=51-347"/>
</dbReference>
<dbReference type="PDB" id="4USJ">
    <property type="method" value="X-ray"/>
    <property type="resolution" value="2.85 A"/>
    <property type="chains" value="A/B=51-347"/>
</dbReference>
<dbReference type="PDBsum" id="2RD5"/>
<dbReference type="PDBsum" id="4USJ"/>
<dbReference type="SMR" id="Q9SCL7"/>
<dbReference type="BioGRID" id="10239">
    <property type="interactions" value="3"/>
</dbReference>
<dbReference type="DIP" id="DIP-53401N"/>
<dbReference type="FunCoup" id="Q9SCL7">
    <property type="interactions" value="809"/>
</dbReference>
<dbReference type="IntAct" id="Q9SCL7">
    <property type="interactions" value="3"/>
</dbReference>
<dbReference type="STRING" id="3702.Q9SCL7"/>
<dbReference type="iPTMnet" id="Q9SCL7"/>
<dbReference type="MetOSite" id="Q9SCL7"/>
<dbReference type="PaxDb" id="3702-AT3G57560.1"/>
<dbReference type="ProteomicsDB" id="251271"/>
<dbReference type="EnsemblPlants" id="AT3G57560.1">
    <property type="protein sequence ID" value="AT3G57560.1"/>
    <property type="gene ID" value="AT3G57560"/>
</dbReference>
<dbReference type="GeneID" id="824923"/>
<dbReference type="Gramene" id="AT3G57560.1">
    <property type="protein sequence ID" value="AT3G57560.1"/>
    <property type="gene ID" value="AT3G57560"/>
</dbReference>
<dbReference type="KEGG" id="ath:AT3G57560"/>
<dbReference type="Araport" id="AT3G57560"/>
<dbReference type="TAIR" id="AT3G57560">
    <property type="gene designation" value="NAGK"/>
</dbReference>
<dbReference type="eggNOG" id="KOG2436">
    <property type="taxonomic scope" value="Eukaryota"/>
</dbReference>
<dbReference type="HOGENOM" id="CLU_053680_0_1_1"/>
<dbReference type="InParanoid" id="Q9SCL7"/>
<dbReference type="OMA" id="EGLYEDW"/>
<dbReference type="OrthoDB" id="438291at2759"/>
<dbReference type="PhylomeDB" id="Q9SCL7"/>
<dbReference type="BioCyc" id="ARA:AT3G57560-MONOMER"/>
<dbReference type="BRENDA" id="2.7.2.8">
    <property type="organism ID" value="399"/>
</dbReference>
<dbReference type="SABIO-RK" id="Q9SCL7"/>
<dbReference type="UniPathway" id="UPA00068">
    <property type="reaction ID" value="UER00107"/>
</dbReference>
<dbReference type="EvolutionaryTrace" id="Q9SCL7"/>
<dbReference type="PRO" id="PR:Q9SCL7"/>
<dbReference type="Proteomes" id="UP000006548">
    <property type="component" value="Chromosome 3"/>
</dbReference>
<dbReference type="ExpressionAtlas" id="Q9SCL7">
    <property type="expression patterns" value="baseline and differential"/>
</dbReference>
<dbReference type="GO" id="GO:0009507">
    <property type="term" value="C:chloroplast"/>
    <property type="evidence" value="ECO:0000314"/>
    <property type="project" value="TAIR"/>
</dbReference>
<dbReference type="GO" id="GO:0009570">
    <property type="term" value="C:chloroplast stroma"/>
    <property type="evidence" value="ECO:0007669"/>
    <property type="project" value="UniProtKB-SubCell"/>
</dbReference>
<dbReference type="GO" id="GO:0009534">
    <property type="term" value="C:chloroplast thylakoid"/>
    <property type="evidence" value="ECO:0007005"/>
    <property type="project" value="TAIR"/>
</dbReference>
<dbReference type="GO" id="GO:0005829">
    <property type="term" value="C:cytosol"/>
    <property type="evidence" value="ECO:0007005"/>
    <property type="project" value="TAIR"/>
</dbReference>
<dbReference type="GO" id="GO:0003991">
    <property type="term" value="F:acetylglutamate kinase activity"/>
    <property type="evidence" value="ECO:0000314"/>
    <property type="project" value="TAIR"/>
</dbReference>
<dbReference type="GO" id="GO:0034618">
    <property type="term" value="F:arginine binding"/>
    <property type="evidence" value="ECO:0000314"/>
    <property type="project" value="UniProtKB"/>
</dbReference>
<dbReference type="GO" id="GO:0005524">
    <property type="term" value="F:ATP binding"/>
    <property type="evidence" value="ECO:0007669"/>
    <property type="project" value="UniProtKB-KW"/>
</dbReference>
<dbReference type="GO" id="GO:0042450">
    <property type="term" value="P:arginine biosynthetic process via ornithine"/>
    <property type="evidence" value="ECO:0000304"/>
    <property type="project" value="TAIR"/>
</dbReference>
<dbReference type="GO" id="GO:0006526">
    <property type="term" value="P:L-arginine biosynthetic process"/>
    <property type="evidence" value="ECO:0007669"/>
    <property type="project" value="UniProtKB-UniPathway"/>
</dbReference>
<dbReference type="CDD" id="cd04250">
    <property type="entry name" value="AAK_NAGK-C"/>
    <property type="match status" value="1"/>
</dbReference>
<dbReference type="FunFam" id="3.40.1160.10:FF:000004">
    <property type="entry name" value="Acetylglutamate kinase"/>
    <property type="match status" value="1"/>
</dbReference>
<dbReference type="Gene3D" id="3.40.1160.10">
    <property type="entry name" value="Acetylglutamate kinase-like"/>
    <property type="match status" value="1"/>
</dbReference>
<dbReference type="HAMAP" id="MF_00082">
    <property type="entry name" value="ArgB"/>
    <property type="match status" value="1"/>
</dbReference>
<dbReference type="InterPro" id="IPR036393">
    <property type="entry name" value="AceGlu_kinase-like_sf"/>
</dbReference>
<dbReference type="InterPro" id="IPR004662">
    <property type="entry name" value="AcgluKinase_fam"/>
</dbReference>
<dbReference type="InterPro" id="IPR037528">
    <property type="entry name" value="ArgB"/>
</dbReference>
<dbReference type="InterPro" id="IPR001048">
    <property type="entry name" value="Asp/Glu/Uridylate_kinase"/>
</dbReference>
<dbReference type="InterPro" id="IPR001057">
    <property type="entry name" value="Glu/AcGlu_kinase"/>
</dbReference>
<dbReference type="InterPro" id="IPR041727">
    <property type="entry name" value="NAGK-C"/>
</dbReference>
<dbReference type="NCBIfam" id="TIGR00761">
    <property type="entry name" value="argB"/>
    <property type="match status" value="1"/>
</dbReference>
<dbReference type="PANTHER" id="PTHR23342">
    <property type="entry name" value="N-ACETYLGLUTAMATE SYNTHASE"/>
    <property type="match status" value="1"/>
</dbReference>
<dbReference type="PANTHER" id="PTHR23342:SF0">
    <property type="entry name" value="N-ACETYLGLUTAMATE SYNTHASE, MITOCHONDRIAL"/>
    <property type="match status" value="1"/>
</dbReference>
<dbReference type="Pfam" id="PF00696">
    <property type="entry name" value="AA_kinase"/>
    <property type="match status" value="1"/>
</dbReference>
<dbReference type="PRINTS" id="PR00474">
    <property type="entry name" value="GLU5KINASE"/>
</dbReference>
<dbReference type="SUPFAM" id="SSF53633">
    <property type="entry name" value="Carbamate kinase-like"/>
    <property type="match status" value="1"/>
</dbReference>
<comment type="function">
    <text evidence="1 2">Involved in the arginine biosynthetic pathway via the intermediate compound ornithine.</text>
</comment>
<comment type="catalytic activity">
    <reaction evidence="1">
        <text>N-acetyl-L-glutamate + ATP = N-acetyl-L-glutamyl 5-phosphate + ADP</text>
        <dbReference type="Rhea" id="RHEA:14629"/>
        <dbReference type="ChEBI" id="CHEBI:30616"/>
        <dbReference type="ChEBI" id="CHEBI:44337"/>
        <dbReference type="ChEBI" id="CHEBI:57936"/>
        <dbReference type="ChEBI" id="CHEBI:456216"/>
        <dbReference type="EC" id="2.7.2.8"/>
    </reaction>
    <physiologicalReaction direction="left-to-right" evidence="1">
        <dbReference type="Rhea" id="RHEA:14630"/>
    </physiologicalReaction>
</comment>
<comment type="activity regulation">
    <text evidence="1 4">Inhibited by arginine. Inhibition is relieved by binding to GLB1.</text>
</comment>
<comment type="biophysicochemical properties">
    <kinetics>
        <KM evidence="1">7.08 mM for N-acetyl glutamate (NAG)</KM>
        <Vmax evidence="1">10.6 mmol/min/mg enzyme with N-acetyl glutamate (NAG) as substrate</Vmax>
    </kinetics>
</comment>
<comment type="pathway">
    <text evidence="8">Amino-acid biosynthesis; L-arginine biosynthesis; N(2)-acetyl-L-ornithine from L-glutamate: step 2/4.</text>
</comment>
<comment type="subunit">
    <text evidence="1 3 4">Interacts with GLB1. Interaction is dependent of MgATP and inhibited by 2-oxoglutarate, arginine, glutamate, citrate, and oxaloacetate.</text>
</comment>
<comment type="interaction">
    <interactant intactId="EBI-701276">
        <id>Q9SCL7</id>
    </interactant>
    <interactant intactId="EBI-701245">
        <id>Q9ZST4</id>
        <label>GLB1</label>
    </interactant>
    <organismsDiffer>false</organismsDiffer>
    <experiments>5</experiments>
</comment>
<comment type="subcellular location">
    <subcellularLocation>
        <location evidence="1">Plastid</location>
        <location evidence="1">Chloroplast stroma</location>
    </subcellularLocation>
</comment>
<comment type="similarity">
    <text evidence="7">Belongs to the acetylglutamate kinase family. ArgB subfamily.</text>
</comment>
<organism>
    <name type="scientific">Arabidopsis thaliana</name>
    <name type="common">Mouse-ear cress</name>
    <dbReference type="NCBI Taxonomy" id="3702"/>
    <lineage>
        <taxon>Eukaryota</taxon>
        <taxon>Viridiplantae</taxon>
        <taxon>Streptophyta</taxon>
        <taxon>Embryophyta</taxon>
        <taxon>Tracheophyta</taxon>
        <taxon>Spermatophyta</taxon>
        <taxon>Magnoliopsida</taxon>
        <taxon>eudicotyledons</taxon>
        <taxon>Gunneridae</taxon>
        <taxon>Pentapetalae</taxon>
        <taxon>rosids</taxon>
        <taxon>malvids</taxon>
        <taxon>Brassicales</taxon>
        <taxon>Brassicaceae</taxon>
        <taxon>Camelineae</taxon>
        <taxon>Arabidopsis</taxon>
    </lineage>
</organism>
<gene>
    <name evidence="6" type="primary">NAGK</name>
    <name evidence="9" type="ordered locus">At3g57560</name>
    <name evidence="10" type="ORF">T8H10.160</name>
</gene>
<reference key="1">
    <citation type="journal article" date="2000" name="Nature">
        <title>Sequence and analysis of chromosome 3 of the plant Arabidopsis thaliana.</title>
        <authorList>
            <person name="Salanoubat M."/>
            <person name="Lemcke K."/>
            <person name="Rieger M."/>
            <person name="Ansorge W."/>
            <person name="Unseld M."/>
            <person name="Fartmann B."/>
            <person name="Valle G."/>
            <person name="Bloecker H."/>
            <person name="Perez-Alonso M."/>
            <person name="Obermaier B."/>
            <person name="Delseny M."/>
            <person name="Boutry M."/>
            <person name="Grivell L.A."/>
            <person name="Mache R."/>
            <person name="Puigdomenech P."/>
            <person name="De Simone V."/>
            <person name="Choisne N."/>
            <person name="Artiguenave F."/>
            <person name="Robert C."/>
            <person name="Brottier P."/>
            <person name="Wincker P."/>
            <person name="Cattolico L."/>
            <person name="Weissenbach J."/>
            <person name="Saurin W."/>
            <person name="Quetier F."/>
            <person name="Schaefer M."/>
            <person name="Mueller-Auer S."/>
            <person name="Gabel C."/>
            <person name="Fuchs M."/>
            <person name="Benes V."/>
            <person name="Wurmbach E."/>
            <person name="Drzonek H."/>
            <person name="Erfle H."/>
            <person name="Jordan N."/>
            <person name="Bangert S."/>
            <person name="Wiedelmann R."/>
            <person name="Kranz H."/>
            <person name="Voss H."/>
            <person name="Holland R."/>
            <person name="Brandt P."/>
            <person name="Nyakatura G."/>
            <person name="Vezzi A."/>
            <person name="D'Angelo M."/>
            <person name="Pallavicini A."/>
            <person name="Toppo S."/>
            <person name="Simionati B."/>
            <person name="Conrad A."/>
            <person name="Hornischer K."/>
            <person name="Kauer G."/>
            <person name="Loehnert T.-H."/>
            <person name="Nordsiek G."/>
            <person name="Reichelt J."/>
            <person name="Scharfe M."/>
            <person name="Schoen O."/>
            <person name="Bargues M."/>
            <person name="Terol J."/>
            <person name="Climent J."/>
            <person name="Navarro P."/>
            <person name="Collado C."/>
            <person name="Perez-Perez A."/>
            <person name="Ottenwaelder B."/>
            <person name="Duchemin D."/>
            <person name="Cooke R."/>
            <person name="Laudie M."/>
            <person name="Berger-Llauro C."/>
            <person name="Purnelle B."/>
            <person name="Masuy D."/>
            <person name="de Haan M."/>
            <person name="Maarse A.C."/>
            <person name="Alcaraz J.-P."/>
            <person name="Cottet A."/>
            <person name="Casacuberta E."/>
            <person name="Monfort A."/>
            <person name="Argiriou A."/>
            <person name="Flores M."/>
            <person name="Liguori R."/>
            <person name="Vitale D."/>
            <person name="Mannhaupt G."/>
            <person name="Haase D."/>
            <person name="Schoof H."/>
            <person name="Rudd S."/>
            <person name="Zaccaria P."/>
            <person name="Mewes H.-W."/>
            <person name="Mayer K.F.X."/>
            <person name="Kaul S."/>
            <person name="Town C.D."/>
            <person name="Koo H.L."/>
            <person name="Tallon L.J."/>
            <person name="Jenkins J."/>
            <person name="Rooney T."/>
            <person name="Rizzo M."/>
            <person name="Walts A."/>
            <person name="Utterback T."/>
            <person name="Fujii C.Y."/>
            <person name="Shea T.P."/>
            <person name="Creasy T.H."/>
            <person name="Haas B."/>
            <person name="Maiti R."/>
            <person name="Wu D."/>
            <person name="Peterson J."/>
            <person name="Van Aken S."/>
            <person name="Pai G."/>
            <person name="Militscher J."/>
            <person name="Sellers P."/>
            <person name="Gill J.E."/>
            <person name="Feldblyum T.V."/>
            <person name="Preuss D."/>
            <person name="Lin X."/>
            <person name="Nierman W.C."/>
            <person name="Salzberg S.L."/>
            <person name="White O."/>
            <person name="Venter J.C."/>
            <person name="Fraser C.M."/>
            <person name="Kaneko T."/>
            <person name="Nakamura Y."/>
            <person name="Sato S."/>
            <person name="Kato T."/>
            <person name="Asamizu E."/>
            <person name="Sasamoto S."/>
            <person name="Kimura T."/>
            <person name="Idesawa K."/>
            <person name="Kawashima K."/>
            <person name="Kishida Y."/>
            <person name="Kiyokawa C."/>
            <person name="Kohara M."/>
            <person name="Matsumoto M."/>
            <person name="Matsuno A."/>
            <person name="Muraki A."/>
            <person name="Nakayama S."/>
            <person name="Nakazaki N."/>
            <person name="Shinpo S."/>
            <person name="Takeuchi C."/>
            <person name="Wada T."/>
            <person name="Watanabe A."/>
            <person name="Yamada M."/>
            <person name="Yasuda M."/>
            <person name="Tabata S."/>
        </authorList>
    </citation>
    <scope>NUCLEOTIDE SEQUENCE [LARGE SCALE GENOMIC DNA]</scope>
    <source>
        <strain>cv. Columbia</strain>
    </source>
</reference>
<reference key="2">
    <citation type="journal article" date="2017" name="Plant J.">
        <title>Araport11: a complete reannotation of the Arabidopsis thaliana reference genome.</title>
        <authorList>
            <person name="Cheng C.Y."/>
            <person name="Krishnakumar V."/>
            <person name="Chan A.P."/>
            <person name="Thibaud-Nissen F."/>
            <person name="Schobel S."/>
            <person name="Town C.D."/>
        </authorList>
    </citation>
    <scope>GENOME REANNOTATION</scope>
    <source>
        <strain>cv. Columbia</strain>
    </source>
</reference>
<reference key="3">
    <citation type="journal article" date="2003" name="Science">
        <title>Empirical analysis of transcriptional activity in the Arabidopsis genome.</title>
        <authorList>
            <person name="Yamada K."/>
            <person name="Lim J."/>
            <person name="Dale J.M."/>
            <person name="Chen H."/>
            <person name="Shinn P."/>
            <person name="Palm C.J."/>
            <person name="Southwick A.M."/>
            <person name="Wu H.C."/>
            <person name="Kim C.J."/>
            <person name="Nguyen M."/>
            <person name="Pham P.K."/>
            <person name="Cheuk R.F."/>
            <person name="Karlin-Newmann G."/>
            <person name="Liu S.X."/>
            <person name="Lam B."/>
            <person name="Sakano H."/>
            <person name="Wu T."/>
            <person name="Yu G."/>
            <person name="Miranda M."/>
            <person name="Quach H.L."/>
            <person name="Tripp M."/>
            <person name="Chang C.H."/>
            <person name="Lee J.M."/>
            <person name="Toriumi M.J."/>
            <person name="Chan M.M."/>
            <person name="Tang C.C."/>
            <person name="Onodera C.S."/>
            <person name="Deng J.M."/>
            <person name="Akiyama K."/>
            <person name="Ansari Y."/>
            <person name="Arakawa T."/>
            <person name="Banh J."/>
            <person name="Banno F."/>
            <person name="Bowser L."/>
            <person name="Brooks S.Y."/>
            <person name="Carninci P."/>
            <person name="Chao Q."/>
            <person name="Choy N."/>
            <person name="Enju A."/>
            <person name="Goldsmith A.D."/>
            <person name="Gurjal M."/>
            <person name="Hansen N.F."/>
            <person name="Hayashizaki Y."/>
            <person name="Johnson-Hopson C."/>
            <person name="Hsuan V.W."/>
            <person name="Iida K."/>
            <person name="Karnes M."/>
            <person name="Khan S."/>
            <person name="Koesema E."/>
            <person name="Ishida J."/>
            <person name="Jiang P.X."/>
            <person name="Jones T."/>
            <person name="Kawai J."/>
            <person name="Kamiya A."/>
            <person name="Meyers C."/>
            <person name="Nakajima M."/>
            <person name="Narusaka M."/>
            <person name="Seki M."/>
            <person name="Sakurai T."/>
            <person name="Satou M."/>
            <person name="Tamse R."/>
            <person name="Vaysberg M."/>
            <person name="Wallender E.K."/>
            <person name="Wong C."/>
            <person name="Yamamura Y."/>
            <person name="Yuan S."/>
            <person name="Shinozaki K."/>
            <person name="Davis R.W."/>
            <person name="Theologis A."/>
            <person name="Ecker J.R."/>
        </authorList>
    </citation>
    <scope>NUCLEOTIDE SEQUENCE [LARGE SCALE MRNA]</scope>
    <source>
        <strain>cv. Columbia</strain>
    </source>
</reference>
<reference key="4">
    <citation type="submission" date="2002-03" db="EMBL/GenBank/DDBJ databases">
        <title>Full-length cDNA from Arabidopsis thaliana.</title>
        <authorList>
            <person name="Brover V.V."/>
            <person name="Troukhan M.E."/>
            <person name="Alexandrov N.A."/>
            <person name="Lu Y.-P."/>
            <person name="Flavell R.B."/>
            <person name="Feldmann K.A."/>
        </authorList>
    </citation>
    <scope>NUCLEOTIDE SEQUENCE [LARGE SCALE MRNA]</scope>
</reference>
<reference key="5">
    <citation type="journal article" date="2006" name="FEBS Lett.">
        <title>The regulatory PII protein controls arginine biosynthesis in Arabidopsis.</title>
        <authorList>
            <person name="Ferrario-Mery S."/>
            <person name="Besin E."/>
            <person name="Pichon O."/>
            <person name="Meyer C."/>
            <person name="Hodges M."/>
        </authorList>
    </citation>
    <scope>FUNCTION</scope>
</reference>
<reference key="6">
    <citation type="journal article" date="2006" name="J. Biol. Chem.">
        <title>The PII signal transduction protein of Arabidopsis thaliana forms an arginine-regulated complex with plastid N-acetyl glutamate kinase.</title>
        <authorList>
            <person name="Chen Y.M."/>
            <person name="Ferrar T.S."/>
            <person name="Lohmeier-Vogel E.M."/>
            <person name="Lohmeir-Vogel E."/>
            <person name="Morrice N."/>
            <person name="Mizuno Y."/>
            <person name="Berenger B."/>
            <person name="Ng K.K."/>
            <person name="Muench D.G."/>
            <person name="Moorhead G.B."/>
        </authorList>
    </citation>
    <scope>PROTEIN SEQUENCE OF 51-58</scope>
    <scope>FUNCTION</scope>
    <scope>CATALYTIC ACTIVITY</scope>
    <scope>ACTIVITY REGULATION</scope>
    <scope>BIOPHYSICOCHEMICAL PROPERTIES</scope>
    <scope>INTERACTION WITH GLB1</scope>
    <scope>SUBCELLULAR LOCATION</scope>
    <scope>IDENTIFICATION BY MASS SPECTROMETRY</scope>
</reference>
<reference key="7">
    <citation type="journal article" date="2009" name="Biochem. Biophys. Res. Commun.">
        <title>Metabolite regulation of the interaction between Arabidopsis thaliana PII and N-acetyl-l-glutamate kinase.</title>
        <authorList>
            <person name="Feria Bourrellier A.B."/>
            <person name="Ferrario-Mery S."/>
            <person name="Vidal J."/>
            <person name="Hodges M."/>
        </authorList>
    </citation>
    <scope>ACTIVITY REGULATION</scope>
    <scope>INTERACTION WITH GLB1</scope>
</reference>
<reference key="8">
    <citation type="journal article" date="2012" name="Mol. Cell. Proteomics">
        <title>Comparative large-scale characterisation of plant vs. mammal proteins reveals similar and idiosyncratic N-alpha acetylation features.</title>
        <authorList>
            <person name="Bienvenut W.V."/>
            <person name="Sumpton D."/>
            <person name="Martinez A."/>
            <person name="Lilla S."/>
            <person name="Espagne C."/>
            <person name="Meinnel T."/>
            <person name="Giglione C."/>
        </authorList>
    </citation>
    <scope>ACETYLATION [LARGE SCALE ANALYSIS] AT THR-51</scope>
    <scope>CLEAVAGE OF TRANSIT PEPTIDE [LARGE SCALE ANALYSIS] AFTER ALA-50</scope>
    <scope>IDENTIFICATION BY MASS SPECTROMETRY [LARGE SCALE ANALYSIS]</scope>
</reference>
<reference key="9">
    <citation type="journal article" date="2007" name="J. Biol. Chem.">
        <title>Structural basis for the regulation of N-acetylglutamate kinase by PII in Arabidopsis thaliana.</title>
        <authorList>
            <person name="Mizuno Y."/>
            <person name="Moorhead G.B."/>
            <person name="Ng K.K."/>
        </authorList>
    </citation>
    <scope>X-RAY CRYSTALLOGRAPHY (2.51 ANGSTROMS) OF 51-347 IN COMPLEX WITH N-ACETYL-L-GLUTAMATE; L-ARGININE; ATP AND ADP</scope>
    <scope>INTERACTION WITH GLB1</scope>
</reference>
<reference key="10">
    <citation type="journal article" date="2014" name="Cell">
        <title>A widespread glutamine-sensing mechanism in the plant kingdom.</title>
        <authorList>
            <person name="Chellamuthu V.R."/>
            <person name="Ermilova E."/>
            <person name="Lapina T."/>
            <person name="Luddecke J."/>
            <person name="Minaeva E."/>
            <person name="Herrmann C."/>
            <person name="Hartmann M.D."/>
            <person name="Forchhammer K."/>
        </authorList>
    </citation>
    <scope>X-RAY CRYSTALLOGRAPHY (2.85 ANGSTROMS) OF 51-347 IN COMPLEX WITH ADP; L-ARGININE AND N-ACETYL-L-GLUTAMATE</scope>
</reference>
<keyword id="KW-0002">3D-structure</keyword>
<keyword id="KW-0007">Acetylation</keyword>
<keyword id="KW-0028">Amino-acid biosynthesis</keyword>
<keyword id="KW-0055">Arginine biosynthesis</keyword>
<keyword id="KW-0067">ATP-binding</keyword>
<keyword id="KW-0150">Chloroplast</keyword>
<keyword id="KW-0903">Direct protein sequencing</keyword>
<keyword id="KW-0418">Kinase</keyword>
<keyword id="KW-0547">Nucleotide-binding</keyword>
<keyword id="KW-0934">Plastid</keyword>
<keyword id="KW-1185">Reference proteome</keyword>
<keyword id="KW-0808">Transferase</keyword>
<keyword id="KW-0809">Transit peptide</keyword>